<reference key="1">
    <citation type="journal article" date="2005" name="Proc. Natl. Acad. Sci. U.S.A.">
        <title>Whole genome sequence of Staphylococcus saprophyticus reveals the pathogenesis of uncomplicated urinary tract infection.</title>
        <authorList>
            <person name="Kuroda M."/>
            <person name="Yamashita A."/>
            <person name="Hirakawa H."/>
            <person name="Kumano M."/>
            <person name="Morikawa K."/>
            <person name="Higashide M."/>
            <person name="Maruyama A."/>
            <person name="Inose Y."/>
            <person name="Matoba K."/>
            <person name="Toh H."/>
            <person name="Kuhara S."/>
            <person name="Hattori M."/>
            <person name="Ohta T."/>
        </authorList>
    </citation>
    <scope>NUCLEOTIDE SEQUENCE [LARGE SCALE GENOMIC DNA]</scope>
    <source>
        <strain>ATCC 15305 / DSM 20229 / NCIMB 8711 / NCTC 7292 / S-41</strain>
    </source>
</reference>
<keyword id="KW-1185">Reference proteome</keyword>
<proteinExistence type="inferred from homology"/>
<organism>
    <name type="scientific">Staphylococcus saprophyticus subsp. saprophyticus (strain ATCC 15305 / DSM 20229 / NCIMB 8711 / NCTC 7292 / S-41)</name>
    <dbReference type="NCBI Taxonomy" id="342451"/>
    <lineage>
        <taxon>Bacteria</taxon>
        <taxon>Bacillati</taxon>
        <taxon>Bacillota</taxon>
        <taxon>Bacilli</taxon>
        <taxon>Bacillales</taxon>
        <taxon>Staphylococcaceae</taxon>
        <taxon>Staphylococcus</taxon>
    </lineage>
</organism>
<protein>
    <recommendedName>
        <fullName>Alkaline shock protein 23</fullName>
    </recommendedName>
</protein>
<comment type="function">
    <text evidence="1">May play a key role in alkaline pH tolerance.</text>
</comment>
<comment type="similarity">
    <text evidence="3">Belongs to the asp23 family.</text>
</comment>
<accession>Q49ZC7</accession>
<feature type="chain" id="PRO_0000296118" description="Alkaline shock protein 23">
    <location>
        <begin position="1"/>
        <end position="166"/>
    </location>
</feature>
<feature type="region of interest" description="Disordered" evidence="2">
    <location>
        <begin position="1"/>
        <end position="40"/>
    </location>
</feature>
<feature type="region of interest" description="Disordered" evidence="2">
    <location>
        <begin position="144"/>
        <end position="166"/>
    </location>
</feature>
<evidence type="ECO:0000250" key="1"/>
<evidence type="ECO:0000256" key="2">
    <source>
        <dbReference type="SAM" id="MobiDB-lite"/>
    </source>
</evidence>
<evidence type="ECO:0000305" key="3"/>
<sequence>MAVDNNKAKQAYDNQTGVNEKEQEQRQEQQNQQPEFTNKLSFSDEVIEKIAGIAAREVSGILEMKGGFVDNISSSFGSNNNVSQGVSVEVGEKQAAVDLKVVLEYGESAPKIFRKVTDLVKEQVKYITGLDVVEVNMRVEDVMTKKEWSQKNEKSQSSNNEDKGLQ</sequence>
<name>ASP23_STAS1</name>
<dbReference type="EMBL" id="AP008934">
    <property type="protein sequence ID" value="BAE17849.1"/>
    <property type="molecule type" value="Genomic_DNA"/>
</dbReference>
<dbReference type="RefSeq" id="WP_011302619.1">
    <property type="nucleotide sequence ID" value="NZ_MTGA01000036.1"/>
</dbReference>
<dbReference type="SMR" id="Q49ZC7"/>
<dbReference type="GeneID" id="23780795"/>
<dbReference type="KEGG" id="ssp:SSP0704"/>
<dbReference type="PATRIC" id="fig|342451.11.peg.706"/>
<dbReference type="eggNOG" id="COG1302">
    <property type="taxonomic scope" value="Bacteria"/>
</dbReference>
<dbReference type="HOGENOM" id="CLU_113198_1_1_9"/>
<dbReference type="OrthoDB" id="9808942at2"/>
<dbReference type="Proteomes" id="UP000006371">
    <property type="component" value="Chromosome"/>
</dbReference>
<dbReference type="InterPro" id="IPR005531">
    <property type="entry name" value="Asp23"/>
</dbReference>
<dbReference type="PANTHER" id="PTHR34297:SF3">
    <property type="entry name" value="ALKALINE SHOCK PROTEIN 23"/>
    <property type="match status" value="1"/>
</dbReference>
<dbReference type="PANTHER" id="PTHR34297">
    <property type="entry name" value="HYPOTHETICAL CYTOSOLIC PROTEIN-RELATED"/>
    <property type="match status" value="1"/>
</dbReference>
<dbReference type="Pfam" id="PF03780">
    <property type="entry name" value="Asp23"/>
    <property type="match status" value="1"/>
</dbReference>
<gene>
    <name type="primary">asp23</name>
    <name type="ordered locus">SSP0704</name>
</gene>